<sequence>MTGVFDRRVPSIRSGDFQAPFPTSAAMHHPSQESPTLPESSATDSDYYSPAGAAPHGYCSPTSASYGKALNPYQYQYHSVNGSAAGYPAKAYADYGYASPYHQYGGAYNRVPSATSQPEKEVAEPEVRMVNGKPKKVRKPRTIYSSFQLAALQRRFQKTQYLALPERAELAASLGLTQTQVKIWFQNKRSKIKKIMKNGEMPPEHSPSSSDPMACNSPQSPAVWEPQGSSRSLSHHPHAHPPTSNQSPASSYLENSASWYPSAASSINSHLPPPGSLQHPLALASGTLY</sequence>
<reference key="1">
    <citation type="journal article" date="1994" name="FEBS Lett.">
        <title>Molecular cloning and evolutional analysis of a mammalian homologue of the Distal-less 3 (Dlx-3) homeobox gene.</title>
        <authorList>
            <person name="Shirasawa T."/>
            <person name="Sakamoto K."/>
            <person name="Takahashi H."/>
        </authorList>
    </citation>
    <scope>NUCLEOTIDE SEQUENCE [MRNA]</scope>
    <source>
        <tissue>Brain</tissue>
    </source>
</reference>
<reference key="2">
    <citation type="journal article" date="1994" name="Dev. Biol.">
        <title>rDlx, a novel distal-less-like homeoprotein is expressed in developing cartilages and discrete neuronal tissues.</title>
        <authorList>
            <person name="Zhao G.-Q."/>
            <person name="Zhao S."/>
            <person name="Zhou X."/>
            <person name="Eberspaecher H."/>
            <person name="Solursh M."/>
            <person name="de Crombrugghe B."/>
        </authorList>
    </citation>
    <scope>NUCLEOTIDE SEQUENCE [MRNA]</scope>
    <source>
        <strain>Sprague-Dawley</strain>
        <tissue>Cartilage</tissue>
    </source>
</reference>
<feature type="chain" id="PRO_0000049033" description="Homeobox protein DLX-5">
    <location>
        <begin position="1"/>
        <end position="289"/>
    </location>
</feature>
<feature type="DNA-binding region" description="Homeobox" evidence="3">
    <location>
        <begin position="137"/>
        <end position="196"/>
    </location>
</feature>
<feature type="region of interest" description="Disordered" evidence="4">
    <location>
        <begin position="1"/>
        <end position="49"/>
    </location>
</feature>
<feature type="region of interest" description="Disordered" evidence="4">
    <location>
        <begin position="198"/>
        <end position="253"/>
    </location>
</feature>
<feature type="region of interest" description="Disordered" evidence="4">
    <location>
        <begin position="270"/>
        <end position="289"/>
    </location>
</feature>
<feature type="compositionally biased region" description="Polar residues" evidence="4">
    <location>
        <begin position="32"/>
        <end position="46"/>
    </location>
</feature>
<feature type="compositionally biased region" description="Polar residues" evidence="4">
    <location>
        <begin position="206"/>
        <end position="220"/>
    </location>
</feature>
<feature type="compositionally biased region" description="Polar residues" evidence="4">
    <location>
        <begin position="242"/>
        <end position="253"/>
    </location>
</feature>
<feature type="modified residue" description="Phosphoserine; by MAPK14; in vitro" evidence="2">
    <location>
        <position position="34"/>
    </location>
</feature>
<feature type="modified residue" description="Phosphoserine; by MAPK14; in vitro" evidence="2">
    <location>
        <position position="217"/>
    </location>
</feature>
<feature type="sequence conflict" description="In Ref. 2; AAA42026." evidence="5" ref="2">
    <original>G</original>
    <variation>R</variation>
    <location>
        <position position="67"/>
    </location>
</feature>
<feature type="sequence conflict" description="In Ref. 2; AAA42026." evidence="5" ref="2">
    <original>P</original>
    <variation>T</variation>
    <location>
        <position position="242"/>
    </location>
</feature>
<dbReference type="EMBL" id="D31734">
    <property type="protein sequence ID" value="BAA06534.1"/>
    <property type="molecule type" value="mRNA"/>
</dbReference>
<dbReference type="EMBL" id="L24443">
    <property type="protein sequence ID" value="AAA42026.1"/>
    <property type="molecule type" value="mRNA"/>
</dbReference>
<dbReference type="PIR" id="I53082">
    <property type="entry name" value="I53082"/>
</dbReference>
<dbReference type="PIR" id="S48664">
    <property type="entry name" value="S48664"/>
</dbReference>
<dbReference type="RefSeq" id="NP_037075.1">
    <property type="nucleotide sequence ID" value="NM_012943.1"/>
</dbReference>
<dbReference type="BMRB" id="P50575"/>
<dbReference type="SMR" id="P50575"/>
<dbReference type="FunCoup" id="P50575">
    <property type="interactions" value="53"/>
</dbReference>
<dbReference type="STRING" id="10116.ENSRNOP00000014946"/>
<dbReference type="GlyGen" id="P50575">
    <property type="glycosylation" value="1 site"/>
</dbReference>
<dbReference type="PhosphoSitePlus" id="P50575"/>
<dbReference type="GeneID" id="25431"/>
<dbReference type="KEGG" id="rno:25431"/>
<dbReference type="UCSC" id="RGD:2506">
    <property type="organism name" value="rat"/>
</dbReference>
<dbReference type="AGR" id="RGD:2506"/>
<dbReference type="CTD" id="1749"/>
<dbReference type="RGD" id="2506">
    <property type="gene designation" value="Dlx5"/>
</dbReference>
<dbReference type="eggNOG" id="KOG0850">
    <property type="taxonomic scope" value="Eukaryota"/>
</dbReference>
<dbReference type="InParanoid" id="P50575"/>
<dbReference type="OrthoDB" id="6159439at2759"/>
<dbReference type="PhylomeDB" id="P50575"/>
<dbReference type="TreeFam" id="TF350606"/>
<dbReference type="PRO" id="PR:P50575"/>
<dbReference type="Proteomes" id="UP000002494">
    <property type="component" value="Unplaced"/>
</dbReference>
<dbReference type="GO" id="GO:0000785">
    <property type="term" value="C:chromatin"/>
    <property type="evidence" value="ECO:0000266"/>
    <property type="project" value="RGD"/>
</dbReference>
<dbReference type="GO" id="GO:0005737">
    <property type="term" value="C:cytoplasm"/>
    <property type="evidence" value="ECO:0000266"/>
    <property type="project" value="RGD"/>
</dbReference>
<dbReference type="GO" id="GO:0005634">
    <property type="term" value="C:nucleus"/>
    <property type="evidence" value="ECO:0000266"/>
    <property type="project" value="RGD"/>
</dbReference>
<dbReference type="GO" id="GO:0003677">
    <property type="term" value="F:DNA binding"/>
    <property type="evidence" value="ECO:0000266"/>
    <property type="project" value="RGD"/>
</dbReference>
<dbReference type="GO" id="GO:0001228">
    <property type="term" value="F:DNA-binding transcription activator activity, RNA polymerase II-specific"/>
    <property type="evidence" value="ECO:0000266"/>
    <property type="project" value="RGD"/>
</dbReference>
<dbReference type="GO" id="GO:0003700">
    <property type="term" value="F:DNA-binding transcription factor activity"/>
    <property type="evidence" value="ECO:0000304"/>
    <property type="project" value="RGD"/>
</dbReference>
<dbReference type="GO" id="GO:0000981">
    <property type="term" value="F:DNA-binding transcription factor activity, RNA polymerase II-specific"/>
    <property type="evidence" value="ECO:0000318"/>
    <property type="project" value="GO_Central"/>
</dbReference>
<dbReference type="GO" id="GO:0071837">
    <property type="term" value="F:HMG box domain binding"/>
    <property type="evidence" value="ECO:0000266"/>
    <property type="project" value="RGD"/>
</dbReference>
<dbReference type="GO" id="GO:0000978">
    <property type="term" value="F:RNA polymerase II cis-regulatory region sequence-specific DNA binding"/>
    <property type="evidence" value="ECO:0000266"/>
    <property type="project" value="RGD"/>
</dbReference>
<dbReference type="GO" id="GO:1990837">
    <property type="term" value="F:sequence-specific double-stranded DNA binding"/>
    <property type="evidence" value="ECO:0000266"/>
    <property type="project" value="RGD"/>
</dbReference>
<dbReference type="GO" id="GO:0000976">
    <property type="term" value="F:transcription cis-regulatory region binding"/>
    <property type="evidence" value="ECO:0000250"/>
    <property type="project" value="UniProtKB"/>
</dbReference>
<dbReference type="GO" id="GO:0048646">
    <property type="term" value="P:anatomical structure formation involved in morphogenesis"/>
    <property type="evidence" value="ECO:0000266"/>
    <property type="project" value="RGD"/>
</dbReference>
<dbReference type="GO" id="GO:0007411">
    <property type="term" value="P:axon guidance"/>
    <property type="evidence" value="ECO:0000266"/>
    <property type="project" value="RGD"/>
</dbReference>
<dbReference type="GO" id="GO:0007409">
    <property type="term" value="P:axonogenesis"/>
    <property type="evidence" value="ECO:0000266"/>
    <property type="project" value="RGD"/>
</dbReference>
<dbReference type="GO" id="GO:0030509">
    <property type="term" value="P:BMP signaling pathway"/>
    <property type="evidence" value="ECO:0000266"/>
    <property type="project" value="RGD"/>
</dbReference>
<dbReference type="GO" id="GO:0060349">
    <property type="term" value="P:bone morphogenesis"/>
    <property type="evidence" value="ECO:0000266"/>
    <property type="project" value="RGD"/>
</dbReference>
<dbReference type="GO" id="GO:0030154">
    <property type="term" value="P:cell differentiation"/>
    <property type="evidence" value="ECO:0000318"/>
    <property type="project" value="GO_Central"/>
</dbReference>
<dbReference type="GO" id="GO:0008283">
    <property type="term" value="P:cell population proliferation"/>
    <property type="evidence" value="ECO:0000250"/>
    <property type="project" value="UniProtKB"/>
</dbReference>
<dbReference type="GO" id="GO:0034224">
    <property type="term" value="P:cellular response to zinc ion starvation"/>
    <property type="evidence" value="ECO:0000270"/>
    <property type="project" value="RGD"/>
</dbReference>
<dbReference type="GO" id="GO:0043583">
    <property type="term" value="P:ear development"/>
    <property type="evidence" value="ECO:0000266"/>
    <property type="project" value="RGD"/>
</dbReference>
<dbReference type="GO" id="GO:0030326">
    <property type="term" value="P:embryonic limb morphogenesis"/>
    <property type="evidence" value="ECO:0000266"/>
    <property type="project" value="RGD"/>
</dbReference>
<dbReference type="GO" id="GO:0048706">
    <property type="term" value="P:embryonic skeletal system development"/>
    <property type="evidence" value="ECO:0000318"/>
    <property type="project" value="GO_Central"/>
</dbReference>
<dbReference type="GO" id="GO:0001958">
    <property type="term" value="P:endochondral ossification"/>
    <property type="evidence" value="ECO:0000250"/>
    <property type="project" value="UniProtKB"/>
</dbReference>
<dbReference type="GO" id="GO:0030855">
    <property type="term" value="P:epithelial cell differentiation"/>
    <property type="evidence" value="ECO:0000266"/>
    <property type="project" value="RGD"/>
</dbReference>
<dbReference type="GO" id="GO:0060325">
    <property type="term" value="P:face morphogenesis"/>
    <property type="evidence" value="ECO:0000266"/>
    <property type="project" value="RGD"/>
</dbReference>
<dbReference type="GO" id="GO:0060322">
    <property type="term" value="P:head development"/>
    <property type="evidence" value="ECO:0000266"/>
    <property type="project" value="RGD"/>
</dbReference>
<dbReference type="GO" id="GO:0042472">
    <property type="term" value="P:inner ear morphogenesis"/>
    <property type="evidence" value="ECO:0000266"/>
    <property type="project" value="RGD"/>
</dbReference>
<dbReference type="GO" id="GO:0097376">
    <property type="term" value="P:interneuron axon guidance"/>
    <property type="evidence" value="ECO:0000266"/>
    <property type="project" value="RGD"/>
</dbReference>
<dbReference type="GO" id="GO:0021889">
    <property type="term" value="P:olfactory bulb interneuron differentiation"/>
    <property type="evidence" value="ECO:0000266"/>
    <property type="project" value="RGD"/>
</dbReference>
<dbReference type="GO" id="GO:0060166">
    <property type="term" value="P:olfactory pit development"/>
    <property type="evidence" value="ECO:0000266"/>
    <property type="project" value="RGD"/>
</dbReference>
<dbReference type="GO" id="GO:0001649">
    <property type="term" value="P:osteoblast differentiation"/>
    <property type="evidence" value="ECO:0000250"/>
    <property type="project" value="UniProtKB"/>
</dbReference>
<dbReference type="GO" id="GO:0090263">
    <property type="term" value="P:positive regulation of canonical Wnt signaling pathway"/>
    <property type="evidence" value="ECO:0000266"/>
    <property type="project" value="RGD"/>
</dbReference>
<dbReference type="GO" id="GO:0045893">
    <property type="term" value="P:positive regulation of DNA-templated transcription"/>
    <property type="evidence" value="ECO:0000250"/>
    <property type="project" value="UniProtKB"/>
</dbReference>
<dbReference type="GO" id="GO:0050679">
    <property type="term" value="P:positive regulation of epithelial cell proliferation"/>
    <property type="evidence" value="ECO:0000266"/>
    <property type="project" value="RGD"/>
</dbReference>
<dbReference type="GO" id="GO:0010628">
    <property type="term" value="P:positive regulation of gene expression"/>
    <property type="evidence" value="ECO:0000266"/>
    <property type="project" value="RGD"/>
</dbReference>
<dbReference type="GO" id="GO:0045669">
    <property type="term" value="P:positive regulation of osteoblast differentiation"/>
    <property type="evidence" value="ECO:0000315"/>
    <property type="project" value="RGD"/>
</dbReference>
<dbReference type="GO" id="GO:0045944">
    <property type="term" value="P:positive regulation of transcription by RNA polymerase II"/>
    <property type="evidence" value="ECO:0000266"/>
    <property type="project" value="RGD"/>
</dbReference>
<dbReference type="GO" id="GO:0006355">
    <property type="term" value="P:regulation of DNA-templated transcription"/>
    <property type="evidence" value="ECO:0000266"/>
    <property type="project" value="RGD"/>
</dbReference>
<dbReference type="GO" id="GO:0006357">
    <property type="term" value="P:regulation of transcription by RNA polymerase II"/>
    <property type="evidence" value="ECO:0000318"/>
    <property type="project" value="GO_Central"/>
</dbReference>
<dbReference type="GO" id="GO:0060021">
    <property type="term" value="P:roof of mouth development"/>
    <property type="evidence" value="ECO:0000266"/>
    <property type="project" value="RGD"/>
</dbReference>
<dbReference type="CDD" id="cd00086">
    <property type="entry name" value="homeodomain"/>
    <property type="match status" value="1"/>
</dbReference>
<dbReference type="FunFam" id="1.10.10.60:FF:000048">
    <property type="entry name" value="Distal-less homeobox 2"/>
    <property type="match status" value="1"/>
</dbReference>
<dbReference type="Gene3D" id="1.10.10.60">
    <property type="entry name" value="Homeodomain-like"/>
    <property type="match status" value="1"/>
</dbReference>
<dbReference type="InterPro" id="IPR050460">
    <property type="entry name" value="Distal-less_Homeobox_TF"/>
</dbReference>
<dbReference type="InterPro" id="IPR022135">
    <property type="entry name" value="Distal-less_N"/>
</dbReference>
<dbReference type="InterPro" id="IPR001356">
    <property type="entry name" value="HD"/>
</dbReference>
<dbReference type="InterPro" id="IPR020479">
    <property type="entry name" value="HD_metazoa"/>
</dbReference>
<dbReference type="InterPro" id="IPR017970">
    <property type="entry name" value="Homeobox_CS"/>
</dbReference>
<dbReference type="InterPro" id="IPR009057">
    <property type="entry name" value="Homeodomain-like_sf"/>
</dbReference>
<dbReference type="InterPro" id="IPR000047">
    <property type="entry name" value="HTH_motif"/>
</dbReference>
<dbReference type="PANTHER" id="PTHR24327">
    <property type="entry name" value="HOMEOBOX PROTEIN"/>
    <property type="match status" value="1"/>
</dbReference>
<dbReference type="PANTHER" id="PTHR24327:SF31">
    <property type="entry name" value="HOMEOBOX PROTEIN DLX-5"/>
    <property type="match status" value="1"/>
</dbReference>
<dbReference type="Pfam" id="PF12413">
    <property type="entry name" value="DLL_N"/>
    <property type="match status" value="1"/>
</dbReference>
<dbReference type="Pfam" id="PF00046">
    <property type="entry name" value="Homeodomain"/>
    <property type="match status" value="1"/>
</dbReference>
<dbReference type="PRINTS" id="PR00024">
    <property type="entry name" value="HOMEOBOX"/>
</dbReference>
<dbReference type="PRINTS" id="PR00031">
    <property type="entry name" value="HTHREPRESSR"/>
</dbReference>
<dbReference type="SMART" id="SM00389">
    <property type="entry name" value="HOX"/>
    <property type="match status" value="1"/>
</dbReference>
<dbReference type="SUPFAM" id="SSF46689">
    <property type="entry name" value="Homeodomain-like"/>
    <property type="match status" value="1"/>
</dbReference>
<dbReference type="PROSITE" id="PS00027">
    <property type="entry name" value="HOMEOBOX_1"/>
    <property type="match status" value="1"/>
</dbReference>
<dbReference type="PROSITE" id="PS50071">
    <property type="entry name" value="HOMEOBOX_2"/>
    <property type="match status" value="1"/>
</dbReference>
<comment type="function">
    <text evidence="1">Transcriptional factor involved in bone development. Acts as an immediate early BMP-responsive transcriptional activator essential for osteoblast differentiation. Stimulates ALPL promoter activity in a RUNX2-independent manner during osteoblast differentiation. Stimulates SP7 promoter activity during osteoblast differentiation. Promotes cell proliferation by up-regulating MYC promoter activity. Involved as a positive regulator of both chondrogenesis and chondrocyte hypertrophy in the endochondral skeleton. Binds to the homeodomain-response element of the ALPL and SP7 promoter. Binds to the MYC promoter. Requires the 5'-TAATTA-3' consensus sequence for DNA-binding (By similarity).</text>
</comment>
<comment type="subunit">
    <text evidence="1">Interacts with XRCC6 (Ku70).</text>
</comment>
<comment type="subcellular location">
    <subcellularLocation>
        <location evidence="3">Nucleus</location>
    </subcellularLocation>
</comment>
<comment type="tissue specificity">
    <text>Mainly expressed in several neuronal tissues and developing tissues.</text>
</comment>
<comment type="developmental stage">
    <text>Present at high levels in embryos on embryonic day 14 (14 dpc), in skeletal tissues on 18 dpc, and in adult brain. At lower levels in newborn rib cartilage, embryo soft tissues on 18 dpc, newborn skin and adult heart.</text>
</comment>
<comment type="PTM">
    <text evidence="1">Phosphorylated. Phosphorylation of Ser-34 and Ser-217 by MAPK14 enhances its transcriptional activity. Phosphorylation by CaMK2 increases its protein stability (By similarity).</text>
</comment>
<comment type="similarity">
    <text evidence="5">Belongs to the distal-less homeobox family.</text>
</comment>
<accession>P50575</accession>
<organism>
    <name type="scientific">Rattus norvegicus</name>
    <name type="common">Rat</name>
    <dbReference type="NCBI Taxonomy" id="10116"/>
    <lineage>
        <taxon>Eukaryota</taxon>
        <taxon>Metazoa</taxon>
        <taxon>Chordata</taxon>
        <taxon>Craniata</taxon>
        <taxon>Vertebrata</taxon>
        <taxon>Euteleostomi</taxon>
        <taxon>Mammalia</taxon>
        <taxon>Eutheria</taxon>
        <taxon>Euarchontoglires</taxon>
        <taxon>Glires</taxon>
        <taxon>Rodentia</taxon>
        <taxon>Myomorpha</taxon>
        <taxon>Muroidea</taxon>
        <taxon>Muridae</taxon>
        <taxon>Murinae</taxon>
        <taxon>Rattus</taxon>
    </lineage>
</organism>
<keyword id="KW-0010">Activator</keyword>
<keyword id="KW-0217">Developmental protein</keyword>
<keyword id="KW-0238">DNA-binding</keyword>
<keyword id="KW-0371">Homeobox</keyword>
<keyword id="KW-0539">Nucleus</keyword>
<keyword id="KW-0892">Osteogenesis</keyword>
<keyword id="KW-0597">Phosphoprotein</keyword>
<keyword id="KW-1185">Reference proteome</keyword>
<keyword id="KW-0804">Transcription</keyword>
<keyword id="KW-0805">Transcription regulation</keyword>
<protein>
    <recommendedName>
        <fullName>Homeobox protein DLX-5</fullName>
    </recommendedName>
    <alternativeName>
        <fullName>Homeobox protein DLX-3</fullName>
    </alternativeName>
    <alternativeName>
        <fullName>RDLX</fullName>
    </alternativeName>
</protein>
<proteinExistence type="evidence at transcript level"/>
<name>DLX5_RAT</name>
<gene>
    <name type="primary">Dlx5</name>
</gene>
<evidence type="ECO:0000250" key="1"/>
<evidence type="ECO:0000250" key="2">
    <source>
        <dbReference type="UniProtKB" id="P70396"/>
    </source>
</evidence>
<evidence type="ECO:0000255" key="3">
    <source>
        <dbReference type="PROSITE-ProRule" id="PRU00108"/>
    </source>
</evidence>
<evidence type="ECO:0000256" key="4">
    <source>
        <dbReference type="SAM" id="MobiDB-lite"/>
    </source>
</evidence>
<evidence type="ECO:0000305" key="5"/>